<sequence length="177" mass="19291">MARFMAYNQNPQMLALCITVAVMFLGVRSELSQDIKGCQDAMSDLYSCLPFVTNKAKAPDSTCCSTLKVKIDKGQTRKCLCTLVKDRDDPGLGFKVDANRAMSLPSACHVPANISQCPDLLHLLPDSPASQIFKQFTESSSQTVGHKAVSTSSSIKGRDNKQFGLMMAGALSIWYIM</sequence>
<accession>Q9M2G1</accession>
<accession>A0A178VAD0</accession>
<accession>Q8LC73</accession>
<gene>
    <name evidence="6" type="primary">LTPG22</name>
    <name evidence="8" type="ordered locus">At3g58550</name>
    <name evidence="9" type="ORF">F14P22.140</name>
</gene>
<dbReference type="EMBL" id="AL137082">
    <property type="protein sequence ID" value="CAB68193.1"/>
    <property type="molecule type" value="Genomic_DNA"/>
</dbReference>
<dbReference type="EMBL" id="CP002686">
    <property type="protein sequence ID" value="AEE79798.1"/>
    <property type="molecule type" value="Genomic_DNA"/>
</dbReference>
<dbReference type="EMBL" id="AK119080">
    <property type="protein sequence ID" value="BAC43656.1"/>
    <property type="molecule type" value="mRNA"/>
</dbReference>
<dbReference type="EMBL" id="BT003738">
    <property type="protein sequence ID" value="AAO39966.1"/>
    <property type="molecule type" value="mRNA"/>
</dbReference>
<dbReference type="EMBL" id="AY086755">
    <property type="protein sequence ID" value="AAM63806.1"/>
    <property type="status" value="ALT_INIT"/>
    <property type="molecule type" value="mRNA"/>
</dbReference>
<dbReference type="PIR" id="T45675">
    <property type="entry name" value="T45675"/>
</dbReference>
<dbReference type="RefSeq" id="NP_191414.1">
    <property type="nucleotide sequence ID" value="NM_115717.3"/>
</dbReference>
<dbReference type="FunCoup" id="Q9M2G1">
    <property type="interactions" value="21"/>
</dbReference>
<dbReference type="STRING" id="3702.Q9M2G1"/>
<dbReference type="GlyCosmos" id="Q9M2G1">
    <property type="glycosylation" value="1 site, No reported glycans"/>
</dbReference>
<dbReference type="GlyGen" id="Q9M2G1">
    <property type="glycosylation" value="1 site"/>
</dbReference>
<dbReference type="PaxDb" id="3702-AT3G58550.1"/>
<dbReference type="ProteomicsDB" id="189354"/>
<dbReference type="EnsemblPlants" id="AT3G58550.1">
    <property type="protein sequence ID" value="AT3G58550.1"/>
    <property type="gene ID" value="AT3G58550"/>
</dbReference>
<dbReference type="GeneID" id="825024"/>
<dbReference type="Gramene" id="AT3G58550.1">
    <property type="protein sequence ID" value="AT3G58550.1"/>
    <property type="gene ID" value="AT3G58550"/>
</dbReference>
<dbReference type="KEGG" id="ath:AT3G58550"/>
<dbReference type="Araport" id="AT3G58550"/>
<dbReference type="TAIR" id="AT3G58550">
    <property type="gene designation" value="LTPG22"/>
</dbReference>
<dbReference type="eggNOG" id="ENOG502RZD2">
    <property type="taxonomic scope" value="Eukaryota"/>
</dbReference>
<dbReference type="HOGENOM" id="CLU_089796_1_1_1"/>
<dbReference type="InParanoid" id="Q9M2G1"/>
<dbReference type="OMA" id="ITQCPEL"/>
<dbReference type="OrthoDB" id="1938537at2759"/>
<dbReference type="PhylomeDB" id="Q9M2G1"/>
<dbReference type="PRO" id="PR:Q9M2G1"/>
<dbReference type="Proteomes" id="UP000006548">
    <property type="component" value="Chromosome 3"/>
</dbReference>
<dbReference type="ExpressionAtlas" id="Q9M2G1">
    <property type="expression patterns" value="baseline and differential"/>
</dbReference>
<dbReference type="GO" id="GO:0005886">
    <property type="term" value="C:plasma membrane"/>
    <property type="evidence" value="ECO:0007669"/>
    <property type="project" value="UniProtKB-SubCell"/>
</dbReference>
<dbReference type="GO" id="GO:0098552">
    <property type="term" value="C:side of membrane"/>
    <property type="evidence" value="ECO:0007669"/>
    <property type="project" value="UniProtKB-KW"/>
</dbReference>
<dbReference type="CDD" id="cd00010">
    <property type="entry name" value="AAI_LTSS"/>
    <property type="match status" value="1"/>
</dbReference>
<dbReference type="FunFam" id="1.10.110.10:FF:000001">
    <property type="entry name" value="Bifunctional inhibitor/lipid-transfer protein/seed storage 2S albumin superfamily protein"/>
    <property type="match status" value="1"/>
</dbReference>
<dbReference type="Gene3D" id="1.10.110.10">
    <property type="entry name" value="Plant lipid-transfer and hydrophobic proteins"/>
    <property type="match status" value="1"/>
</dbReference>
<dbReference type="InterPro" id="IPR036312">
    <property type="entry name" value="Bifun_inhib/LTP/seed_sf"/>
</dbReference>
<dbReference type="InterPro" id="IPR016140">
    <property type="entry name" value="Bifunc_inhib/LTP/seed_store"/>
</dbReference>
<dbReference type="InterPro" id="IPR043325">
    <property type="entry name" value="LTSS"/>
</dbReference>
<dbReference type="PANTHER" id="PTHR33044">
    <property type="entry name" value="BIFUNCTIONAL INHIBITOR/LIPID-TRANSFER PROTEIN/SEED STORAGE 2S ALBUMIN SUPERFAMILY PROTEIN-RELATED"/>
    <property type="match status" value="1"/>
</dbReference>
<dbReference type="Pfam" id="PF14368">
    <property type="entry name" value="LTP_2"/>
    <property type="match status" value="1"/>
</dbReference>
<dbReference type="SMART" id="SM00499">
    <property type="entry name" value="AAI"/>
    <property type="match status" value="1"/>
</dbReference>
<dbReference type="SUPFAM" id="SSF47699">
    <property type="entry name" value="Bifunctional inhibitor/lipid-transfer protein/seed storage 2S albumin"/>
    <property type="match status" value="1"/>
</dbReference>
<protein>
    <recommendedName>
        <fullName evidence="6">Non-specific lipid transfer protein GPI-anchored 22</fullName>
        <shortName evidence="6">AtLTPG-22</shortName>
        <shortName evidence="6">Protein LTP-GPI-ANCHORED 22</shortName>
    </recommendedName>
</protein>
<keyword id="KW-1003">Cell membrane</keyword>
<keyword id="KW-1015">Disulfide bond</keyword>
<keyword id="KW-0325">Glycoprotein</keyword>
<keyword id="KW-0336">GPI-anchor</keyword>
<keyword id="KW-0449">Lipoprotein</keyword>
<keyword id="KW-0472">Membrane</keyword>
<keyword id="KW-1185">Reference proteome</keyword>
<keyword id="KW-0732">Signal</keyword>
<organism>
    <name type="scientific">Arabidopsis thaliana</name>
    <name type="common">Mouse-ear cress</name>
    <dbReference type="NCBI Taxonomy" id="3702"/>
    <lineage>
        <taxon>Eukaryota</taxon>
        <taxon>Viridiplantae</taxon>
        <taxon>Streptophyta</taxon>
        <taxon>Embryophyta</taxon>
        <taxon>Tracheophyta</taxon>
        <taxon>Spermatophyta</taxon>
        <taxon>Magnoliopsida</taxon>
        <taxon>eudicotyledons</taxon>
        <taxon>Gunneridae</taxon>
        <taxon>Pentapetalae</taxon>
        <taxon>rosids</taxon>
        <taxon>malvids</taxon>
        <taxon>Brassicales</taxon>
        <taxon>Brassicaceae</taxon>
        <taxon>Camelineae</taxon>
        <taxon>Arabidopsis</taxon>
    </lineage>
</organism>
<comment type="function">
    <text evidence="2">Probable lipid transfer protein.</text>
</comment>
<comment type="subcellular location">
    <subcellularLocation>
        <location evidence="3">Cell membrane</location>
        <topology evidence="3">Lipid-anchor</topology>
        <topology evidence="3">GPI-anchor</topology>
    </subcellularLocation>
</comment>
<comment type="tissue specificity">
    <text evidence="5">Expressed in seedlings, preferentially in hypocotyls and roots (PubMed:23893219). Also observed in siliques (PubMed:23893219).</text>
</comment>
<comment type="similarity">
    <text evidence="7">Belongs to the plant LTP family.</text>
</comment>
<comment type="sequence caution" evidence="7">
    <conflict type="erroneous initiation">
        <sequence resource="EMBL-CDS" id="AAM63806"/>
    </conflict>
    <text>Truncated N-terminus.</text>
</comment>
<name>LTG22_ARATH</name>
<feature type="signal peptide" evidence="3">
    <location>
        <begin position="1"/>
        <end position="29"/>
    </location>
</feature>
<feature type="chain" id="PRO_5015099898" description="Non-specific lipid transfer protein GPI-anchored 22">
    <location>
        <begin position="30"/>
        <end position="152"/>
    </location>
</feature>
<feature type="propeptide" id="PRO_0000451653" description="Removed in mature form" evidence="3">
    <location>
        <begin position="153"/>
        <end position="177"/>
    </location>
</feature>
<feature type="lipid moiety-binding region" description="GPI-anchor amidated serine" evidence="3">
    <location>
        <position position="152"/>
    </location>
</feature>
<feature type="glycosylation site" description="N-linked (GlcNAc...) asparagine" evidence="4">
    <location>
        <position position="113"/>
    </location>
</feature>
<feature type="disulfide bond" evidence="1">
    <location>
        <begin position="38"/>
        <end position="81"/>
    </location>
</feature>
<feature type="disulfide bond" evidence="1">
    <location>
        <begin position="48"/>
        <end position="63"/>
    </location>
</feature>
<feature type="disulfide bond" evidence="1">
    <location>
        <begin position="64"/>
        <end position="108"/>
    </location>
</feature>
<feature type="disulfide bond" evidence="1">
    <location>
        <begin position="79"/>
        <end position="117"/>
    </location>
</feature>
<proteinExistence type="evidence at transcript level"/>
<evidence type="ECO:0000250" key="1">
    <source>
        <dbReference type="UniProtKB" id="A0A0B4JDK1"/>
    </source>
</evidence>
<evidence type="ECO:0000250" key="2">
    <source>
        <dbReference type="UniProtKB" id="Q9C7F7"/>
    </source>
</evidence>
<evidence type="ECO:0000255" key="3"/>
<evidence type="ECO:0000255" key="4">
    <source>
        <dbReference type="PROSITE-ProRule" id="PRU00498"/>
    </source>
</evidence>
<evidence type="ECO:0000269" key="5">
    <source>
    </source>
</evidence>
<evidence type="ECO:0000303" key="6">
    <source>
    </source>
</evidence>
<evidence type="ECO:0000305" key="7"/>
<evidence type="ECO:0000312" key="8">
    <source>
        <dbReference type="Araport" id="AT3G58550"/>
    </source>
</evidence>
<evidence type="ECO:0000312" key="9">
    <source>
        <dbReference type="EMBL" id="CAB68193.1"/>
    </source>
</evidence>
<reference key="1">
    <citation type="journal article" date="2000" name="Nature">
        <title>Sequence and analysis of chromosome 3 of the plant Arabidopsis thaliana.</title>
        <authorList>
            <person name="Salanoubat M."/>
            <person name="Lemcke K."/>
            <person name="Rieger M."/>
            <person name="Ansorge W."/>
            <person name="Unseld M."/>
            <person name="Fartmann B."/>
            <person name="Valle G."/>
            <person name="Bloecker H."/>
            <person name="Perez-Alonso M."/>
            <person name="Obermaier B."/>
            <person name="Delseny M."/>
            <person name="Boutry M."/>
            <person name="Grivell L.A."/>
            <person name="Mache R."/>
            <person name="Puigdomenech P."/>
            <person name="De Simone V."/>
            <person name="Choisne N."/>
            <person name="Artiguenave F."/>
            <person name="Robert C."/>
            <person name="Brottier P."/>
            <person name="Wincker P."/>
            <person name="Cattolico L."/>
            <person name="Weissenbach J."/>
            <person name="Saurin W."/>
            <person name="Quetier F."/>
            <person name="Schaefer M."/>
            <person name="Mueller-Auer S."/>
            <person name="Gabel C."/>
            <person name="Fuchs M."/>
            <person name="Benes V."/>
            <person name="Wurmbach E."/>
            <person name="Drzonek H."/>
            <person name="Erfle H."/>
            <person name="Jordan N."/>
            <person name="Bangert S."/>
            <person name="Wiedelmann R."/>
            <person name="Kranz H."/>
            <person name="Voss H."/>
            <person name="Holland R."/>
            <person name="Brandt P."/>
            <person name="Nyakatura G."/>
            <person name="Vezzi A."/>
            <person name="D'Angelo M."/>
            <person name="Pallavicini A."/>
            <person name="Toppo S."/>
            <person name="Simionati B."/>
            <person name="Conrad A."/>
            <person name="Hornischer K."/>
            <person name="Kauer G."/>
            <person name="Loehnert T.-H."/>
            <person name="Nordsiek G."/>
            <person name="Reichelt J."/>
            <person name="Scharfe M."/>
            <person name="Schoen O."/>
            <person name="Bargues M."/>
            <person name="Terol J."/>
            <person name="Climent J."/>
            <person name="Navarro P."/>
            <person name="Collado C."/>
            <person name="Perez-Perez A."/>
            <person name="Ottenwaelder B."/>
            <person name="Duchemin D."/>
            <person name="Cooke R."/>
            <person name="Laudie M."/>
            <person name="Berger-Llauro C."/>
            <person name="Purnelle B."/>
            <person name="Masuy D."/>
            <person name="de Haan M."/>
            <person name="Maarse A.C."/>
            <person name="Alcaraz J.-P."/>
            <person name="Cottet A."/>
            <person name="Casacuberta E."/>
            <person name="Monfort A."/>
            <person name="Argiriou A."/>
            <person name="Flores M."/>
            <person name="Liguori R."/>
            <person name="Vitale D."/>
            <person name="Mannhaupt G."/>
            <person name="Haase D."/>
            <person name="Schoof H."/>
            <person name="Rudd S."/>
            <person name="Zaccaria P."/>
            <person name="Mewes H.-W."/>
            <person name="Mayer K.F.X."/>
            <person name="Kaul S."/>
            <person name="Town C.D."/>
            <person name="Koo H.L."/>
            <person name="Tallon L.J."/>
            <person name="Jenkins J."/>
            <person name="Rooney T."/>
            <person name="Rizzo M."/>
            <person name="Walts A."/>
            <person name="Utterback T."/>
            <person name="Fujii C.Y."/>
            <person name="Shea T.P."/>
            <person name="Creasy T.H."/>
            <person name="Haas B."/>
            <person name="Maiti R."/>
            <person name="Wu D."/>
            <person name="Peterson J."/>
            <person name="Van Aken S."/>
            <person name="Pai G."/>
            <person name="Militscher J."/>
            <person name="Sellers P."/>
            <person name="Gill J.E."/>
            <person name="Feldblyum T.V."/>
            <person name="Preuss D."/>
            <person name="Lin X."/>
            <person name="Nierman W.C."/>
            <person name="Salzberg S.L."/>
            <person name="White O."/>
            <person name="Venter J.C."/>
            <person name="Fraser C.M."/>
            <person name="Kaneko T."/>
            <person name="Nakamura Y."/>
            <person name="Sato S."/>
            <person name="Kato T."/>
            <person name="Asamizu E."/>
            <person name="Sasamoto S."/>
            <person name="Kimura T."/>
            <person name="Idesawa K."/>
            <person name="Kawashima K."/>
            <person name="Kishida Y."/>
            <person name="Kiyokawa C."/>
            <person name="Kohara M."/>
            <person name="Matsumoto M."/>
            <person name="Matsuno A."/>
            <person name="Muraki A."/>
            <person name="Nakayama S."/>
            <person name="Nakazaki N."/>
            <person name="Shinpo S."/>
            <person name="Takeuchi C."/>
            <person name="Wada T."/>
            <person name="Watanabe A."/>
            <person name="Yamada M."/>
            <person name="Yasuda M."/>
            <person name="Tabata S."/>
        </authorList>
    </citation>
    <scope>NUCLEOTIDE SEQUENCE [LARGE SCALE GENOMIC DNA]</scope>
    <source>
        <strain>cv. Columbia</strain>
    </source>
</reference>
<reference key="2">
    <citation type="journal article" date="2017" name="Plant J.">
        <title>Araport11: a complete reannotation of the Arabidopsis thaliana reference genome.</title>
        <authorList>
            <person name="Cheng C.Y."/>
            <person name="Krishnakumar V."/>
            <person name="Chan A.P."/>
            <person name="Thibaud-Nissen F."/>
            <person name="Schobel S."/>
            <person name="Town C.D."/>
        </authorList>
    </citation>
    <scope>GENOME REANNOTATION</scope>
    <source>
        <strain>cv. Columbia</strain>
    </source>
</reference>
<reference key="3">
    <citation type="journal article" date="2002" name="Science">
        <title>Functional annotation of a full-length Arabidopsis cDNA collection.</title>
        <authorList>
            <person name="Seki M."/>
            <person name="Narusaka M."/>
            <person name="Kamiya A."/>
            <person name="Ishida J."/>
            <person name="Satou M."/>
            <person name="Sakurai T."/>
            <person name="Nakajima M."/>
            <person name="Enju A."/>
            <person name="Akiyama K."/>
            <person name="Oono Y."/>
            <person name="Muramatsu M."/>
            <person name="Hayashizaki Y."/>
            <person name="Kawai J."/>
            <person name="Carninci P."/>
            <person name="Itoh M."/>
            <person name="Ishii Y."/>
            <person name="Arakawa T."/>
            <person name="Shibata K."/>
            <person name="Shinagawa A."/>
            <person name="Shinozaki K."/>
        </authorList>
    </citation>
    <scope>NUCLEOTIDE SEQUENCE [LARGE SCALE MRNA]</scope>
    <source>
        <strain>cv. Columbia</strain>
    </source>
</reference>
<reference key="4">
    <citation type="journal article" date="2003" name="Science">
        <title>Empirical analysis of transcriptional activity in the Arabidopsis genome.</title>
        <authorList>
            <person name="Yamada K."/>
            <person name="Lim J."/>
            <person name="Dale J.M."/>
            <person name="Chen H."/>
            <person name="Shinn P."/>
            <person name="Palm C.J."/>
            <person name="Southwick A.M."/>
            <person name="Wu H.C."/>
            <person name="Kim C.J."/>
            <person name="Nguyen M."/>
            <person name="Pham P.K."/>
            <person name="Cheuk R.F."/>
            <person name="Karlin-Newmann G."/>
            <person name="Liu S.X."/>
            <person name="Lam B."/>
            <person name="Sakano H."/>
            <person name="Wu T."/>
            <person name="Yu G."/>
            <person name="Miranda M."/>
            <person name="Quach H.L."/>
            <person name="Tripp M."/>
            <person name="Chang C.H."/>
            <person name="Lee J.M."/>
            <person name="Toriumi M.J."/>
            <person name="Chan M.M."/>
            <person name="Tang C.C."/>
            <person name="Onodera C.S."/>
            <person name="Deng J.M."/>
            <person name="Akiyama K."/>
            <person name="Ansari Y."/>
            <person name="Arakawa T."/>
            <person name="Banh J."/>
            <person name="Banno F."/>
            <person name="Bowser L."/>
            <person name="Brooks S.Y."/>
            <person name="Carninci P."/>
            <person name="Chao Q."/>
            <person name="Choy N."/>
            <person name="Enju A."/>
            <person name="Goldsmith A.D."/>
            <person name="Gurjal M."/>
            <person name="Hansen N.F."/>
            <person name="Hayashizaki Y."/>
            <person name="Johnson-Hopson C."/>
            <person name="Hsuan V.W."/>
            <person name="Iida K."/>
            <person name="Karnes M."/>
            <person name="Khan S."/>
            <person name="Koesema E."/>
            <person name="Ishida J."/>
            <person name="Jiang P.X."/>
            <person name="Jones T."/>
            <person name="Kawai J."/>
            <person name="Kamiya A."/>
            <person name="Meyers C."/>
            <person name="Nakajima M."/>
            <person name="Narusaka M."/>
            <person name="Seki M."/>
            <person name="Sakurai T."/>
            <person name="Satou M."/>
            <person name="Tamse R."/>
            <person name="Vaysberg M."/>
            <person name="Wallender E.K."/>
            <person name="Wong C."/>
            <person name="Yamamura Y."/>
            <person name="Yuan S."/>
            <person name="Shinozaki K."/>
            <person name="Davis R.W."/>
            <person name="Theologis A."/>
            <person name="Ecker J.R."/>
        </authorList>
    </citation>
    <scope>NUCLEOTIDE SEQUENCE [LARGE SCALE MRNA]</scope>
    <source>
        <strain>cv. Columbia</strain>
    </source>
</reference>
<reference key="5">
    <citation type="submission" date="2002-03" db="EMBL/GenBank/DDBJ databases">
        <title>Full-length cDNA from Arabidopsis thaliana.</title>
        <authorList>
            <person name="Brover V.V."/>
            <person name="Troukhan M.E."/>
            <person name="Alexandrov N.A."/>
            <person name="Lu Y.-P."/>
            <person name="Flavell R.B."/>
            <person name="Feldmann K.A."/>
        </authorList>
    </citation>
    <scope>NUCLEOTIDE SEQUENCE [LARGE SCALE MRNA]</scope>
</reference>
<reference key="6">
    <citation type="journal article" date="2013" name="Plant Mol. Biol.">
        <title>Coexpression patterns indicate that GPI-anchored non-specific lipid transfer proteins are involved in accumulation of cuticular wax, suberin and sporopollenin.</title>
        <authorList>
            <person name="Edstam M.M."/>
            <person name="Blomqvist K."/>
            <person name="Ekloef A."/>
            <person name="Wennergren U."/>
            <person name="Edqvist J."/>
        </authorList>
    </citation>
    <scope>TISSUE SPECIFICITY</scope>
    <scope>GENE FAMILY</scope>
    <scope>NOMENCLATURE</scope>
    <source>
        <strain>cv. Columbia</strain>
    </source>
</reference>